<evidence type="ECO:0000255" key="1">
    <source>
        <dbReference type="HAMAP-Rule" id="MF_01808"/>
    </source>
</evidence>
<evidence type="ECO:0000255" key="2">
    <source>
        <dbReference type="PROSITE-ProRule" id="PRU01246"/>
    </source>
</evidence>
<evidence type="ECO:0000255" key="3">
    <source>
        <dbReference type="PROSITE-ProRule" id="PRU01248"/>
    </source>
</evidence>
<accession>Q1RK56</accession>
<organism>
    <name type="scientific">Rickettsia bellii (strain RML369-C)</name>
    <dbReference type="NCBI Taxonomy" id="336407"/>
    <lineage>
        <taxon>Bacteria</taxon>
        <taxon>Pseudomonadati</taxon>
        <taxon>Pseudomonadota</taxon>
        <taxon>Alphaproteobacteria</taxon>
        <taxon>Rickettsiales</taxon>
        <taxon>Rickettsiaceae</taxon>
        <taxon>Rickettsieae</taxon>
        <taxon>Rickettsia</taxon>
        <taxon>belli group</taxon>
    </lineage>
</organism>
<comment type="function">
    <text evidence="1">Site-specific tyrosine recombinase, which acts by catalyzing the cutting and rejoining of the recombining DNA molecules. The XerC-XerD complex is essential to convert dimers of the bacterial chromosome into monomers to permit their segregation at cell division. It also contributes to the segregational stability of plasmids.</text>
</comment>
<comment type="subunit">
    <text evidence="1">Forms a cyclic heterotetrameric complex composed of two molecules of XerC and two molecules of XerD.</text>
</comment>
<comment type="subcellular location">
    <subcellularLocation>
        <location evidence="1">Cytoplasm</location>
    </subcellularLocation>
</comment>
<comment type="similarity">
    <text evidence="1">Belongs to the 'phage' integrase family. XerC subfamily.</text>
</comment>
<dbReference type="EMBL" id="CP000087">
    <property type="protein sequence ID" value="ABE04258.1"/>
    <property type="molecule type" value="Genomic_DNA"/>
</dbReference>
<dbReference type="RefSeq" id="WP_011476872.1">
    <property type="nucleotide sequence ID" value="NC_007940.1"/>
</dbReference>
<dbReference type="SMR" id="Q1RK56"/>
<dbReference type="KEGG" id="rbe:RBE_0177"/>
<dbReference type="eggNOG" id="COG4974">
    <property type="taxonomic scope" value="Bacteria"/>
</dbReference>
<dbReference type="HOGENOM" id="CLU_027562_9_0_5"/>
<dbReference type="OrthoDB" id="9801717at2"/>
<dbReference type="Proteomes" id="UP000001951">
    <property type="component" value="Chromosome"/>
</dbReference>
<dbReference type="GO" id="GO:0005737">
    <property type="term" value="C:cytoplasm"/>
    <property type="evidence" value="ECO:0007669"/>
    <property type="project" value="UniProtKB-SubCell"/>
</dbReference>
<dbReference type="GO" id="GO:0003677">
    <property type="term" value="F:DNA binding"/>
    <property type="evidence" value="ECO:0007669"/>
    <property type="project" value="UniProtKB-KW"/>
</dbReference>
<dbReference type="GO" id="GO:0009037">
    <property type="term" value="F:tyrosine-based site-specific recombinase activity"/>
    <property type="evidence" value="ECO:0007669"/>
    <property type="project" value="UniProtKB-UniRule"/>
</dbReference>
<dbReference type="GO" id="GO:0051301">
    <property type="term" value="P:cell division"/>
    <property type="evidence" value="ECO:0007669"/>
    <property type="project" value="UniProtKB-KW"/>
</dbReference>
<dbReference type="GO" id="GO:0007059">
    <property type="term" value="P:chromosome segregation"/>
    <property type="evidence" value="ECO:0007669"/>
    <property type="project" value="UniProtKB-UniRule"/>
</dbReference>
<dbReference type="GO" id="GO:0006313">
    <property type="term" value="P:DNA transposition"/>
    <property type="evidence" value="ECO:0007669"/>
    <property type="project" value="UniProtKB-UniRule"/>
</dbReference>
<dbReference type="CDD" id="cd00798">
    <property type="entry name" value="INT_XerDC_C"/>
    <property type="match status" value="1"/>
</dbReference>
<dbReference type="Gene3D" id="1.10.150.130">
    <property type="match status" value="1"/>
</dbReference>
<dbReference type="Gene3D" id="1.10.443.10">
    <property type="entry name" value="Intergrase catalytic core"/>
    <property type="match status" value="1"/>
</dbReference>
<dbReference type="HAMAP" id="MF_01808">
    <property type="entry name" value="Recomb_XerC_XerD"/>
    <property type="match status" value="1"/>
</dbReference>
<dbReference type="InterPro" id="IPR044068">
    <property type="entry name" value="CB"/>
</dbReference>
<dbReference type="InterPro" id="IPR011010">
    <property type="entry name" value="DNA_brk_join_enz"/>
</dbReference>
<dbReference type="InterPro" id="IPR013762">
    <property type="entry name" value="Integrase-like_cat_sf"/>
</dbReference>
<dbReference type="InterPro" id="IPR002104">
    <property type="entry name" value="Integrase_catalytic"/>
</dbReference>
<dbReference type="InterPro" id="IPR010998">
    <property type="entry name" value="Integrase_recombinase_N"/>
</dbReference>
<dbReference type="InterPro" id="IPR004107">
    <property type="entry name" value="Integrase_SAM-like_N"/>
</dbReference>
<dbReference type="InterPro" id="IPR023009">
    <property type="entry name" value="Tyrosine_recombinase_XerC/XerD"/>
</dbReference>
<dbReference type="InterPro" id="IPR050090">
    <property type="entry name" value="Tyrosine_recombinase_XerCD"/>
</dbReference>
<dbReference type="PANTHER" id="PTHR30349">
    <property type="entry name" value="PHAGE INTEGRASE-RELATED"/>
    <property type="match status" value="1"/>
</dbReference>
<dbReference type="PANTHER" id="PTHR30349:SF90">
    <property type="entry name" value="TYROSINE RECOMBINASE XERD"/>
    <property type="match status" value="1"/>
</dbReference>
<dbReference type="Pfam" id="PF02899">
    <property type="entry name" value="Phage_int_SAM_1"/>
    <property type="match status" value="1"/>
</dbReference>
<dbReference type="Pfam" id="PF00589">
    <property type="entry name" value="Phage_integrase"/>
    <property type="match status" value="1"/>
</dbReference>
<dbReference type="SUPFAM" id="SSF56349">
    <property type="entry name" value="DNA breaking-rejoining enzymes"/>
    <property type="match status" value="1"/>
</dbReference>
<dbReference type="PROSITE" id="PS51900">
    <property type="entry name" value="CB"/>
    <property type="match status" value="1"/>
</dbReference>
<dbReference type="PROSITE" id="PS51898">
    <property type="entry name" value="TYR_RECOMBINASE"/>
    <property type="match status" value="1"/>
</dbReference>
<proteinExistence type="inferred from homology"/>
<name>XERC_RICBR</name>
<sequence length="305" mass="35517">MLDTQIQELIIKWQKYLSLQKNYSNHTLISYNNDLKHFLEFMNYYNSDIVTMDYIKAADIRLMRSWLAKRKCDNFVTSSIARGLSAIKNFYKFLEKTAELHNHVVFSIKSPKKSKLLPKALSEEEVNISLDHIEEYGNSQWIEIRNKALLVLIYASGLRISEALSITKLHLQNLEFIKIMGKGSKERVIPWLAIARNLITEYLEKLPYELKDDEPIFRGKQGKKLQPPVFNRELIKLKRFYGLPEYLSAHSFRHSFASHLLENGADLRSIQELLGHKSLSTTQSYTKTSIKHLETAYVTAHPIKK</sequence>
<keyword id="KW-0131">Cell cycle</keyword>
<keyword id="KW-0132">Cell division</keyword>
<keyword id="KW-0159">Chromosome partition</keyword>
<keyword id="KW-0963">Cytoplasm</keyword>
<keyword id="KW-0229">DNA integration</keyword>
<keyword id="KW-0233">DNA recombination</keyword>
<keyword id="KW-0238">DNA-binding</keyword>
<gene>
    <name evidence="1" type="primary">xerC</name>
    <name type="ordered locus">RBE_0177</name>
</gene>
<feature type="chain" id="PRO_0000272365" description="Tyrosine recombinase XerC">
    <location>
        <begin position="1"/>
        <end position="305"/>
    </location>
</feature>
<feature type="domain" description="Core-binding (CB)" evidence="3">
    <location>
        <begin position="4"/>
        <end position="95"/>
    </location>
</feature>
<feature type="domain" description="Tyr recombinase" evidence="2">
    <location>
        <begin position="116"/>
        <end position="298"/>
    </location>
</feature>
<feature type="active site" evidence="1">
    <location>
        <position position="159"/>
    </location>
</feature>
<feature type="active site" evidence="1">
    <location>
        <position position="182"/>
    </location>
</feature>
<feature type="active site" evidence="1">
    <location>
        <position position="250"/>
    </location>
</feature>
<feature type="active site" evidence="1">
    <location>
        <position position="253"/>
    </location>
</feature>
<feature type="active site" evidence="1">
    <location>
        <position position="276"/>
    </location>
</feature>
<feature type="active site" description="O-(3'-phospho-DNA)-tyrosine intermediate" evidence="1">
    <location>
        <position position="285"/>
    </location>
</feature>
<protein>
    <recommendedName>
        <fullName evidence="1">Tyrosine recombinase XerC</fullName>
    </recommendedName>
</protein>
<reference key="1">
    <citation type="journal article" date="2006" name="PLoS Genet.">
        <title>Genome sequence of Rickettsia bellii illuminates the role of amoebae in gene exchanges between intracellular pathogens.</title>
        <authorList>
            <person name="Ogata H."/>
            <person name="La Scola B."/>
            <person name="Audic S."/>
            <person name="Renesto P."/>
            <person name="Blanc G."/>
            <person name="Robert C."/>
            <person name="Fournier P.-E."/>
            <person name="Claverie J.-M."/>
            <person name="Raoult D."/>
        </authorList>
    </citation>
    <scope>NUCLEOTIDE SEQUENCE [LARGE SCALE GENOMIC DNA]</scope>
    <source>
        <strain>RML369-C</strain>
    </source>
</reference>